<comment type="function">
    <text evidence="1">One of the primary rRNA binding proteins, it binds directly to 16S rRNA where it nucleates assembly of the head domain of the 30S subunit. Is located at the subunit interface close to the decoding center, probably blocks exit of the E-site tRNA.</text>
</comment>
<comment type="subunit">
    <text evidence="1">Part of the 30S ribosomal subunit. Contacts proteins S9 and S11.</text>
</comment>
<comment type="similarity">
    <text evidence="1">Belongs to the universal ribosomal protein uS7 family.</text>
</comment>
<protein>
    <recommendedName>
        <fullName evidence="1">Small ribosomal subunit protein uS7</fullName>
    </recommendedName>
    <alternativeName>
        <fullName evidence="2">30S ribosomal protein S7</fullName>
    </alternativeName>
</protein>
<proteinExistence type="inferred from homology"/>
<feature type="chain" id="PRO_0000241750" description="Small ribosomal subunit protein uS7">
    <location>
        <begin position="1"/>
        <end position="160"/>
    </location>
</feature>
<accession>Q2GJ59</accession>
<name>RS7_ANAPZ</name>
<organism>
    <name type="scientific">Anaplasma phagocytophilum (strain HZ)</name>
    <dbReference type="NCBI Taxonomy" id="212042"/>
    <lineage>
        <taxon>Bacteria</taxon>
        <taxon>Pseudomonadati</taxon>
        <taxon>Pseudomonadota</taxon>
        <taxon>Alphaproteobacteria</taxon>
        <taxon>Rickettsiales</taxon>
        <taxon>Anaplasmataceae</taxon>
        <taxon>Anaplasma</taxon>
        <taxon>phagocytophilum group</taxon>
    </lineage>
</organism>
<dbReference type="EMBL" id="CP000235">
    <property type="protein sequence ID" value="ABD43745.1"/>
    <property type="molecule type" value="Genomic_DNA"/>
</dbReference>
<dbReference type="RefSeq" id="WP_011451104.1">
    <property type="nucleotide sequence ID" value="NC_007797.1"/>
</dbReference>
<dbReference type="SMR" id="Q2GJ59"/>
<dbReference type="STRING" id="212042.APH_1034"/>
<dbReference type="PaxDb" id="212042-APH_1034"/>
<dbReference type="EnsemblBacteria" id="ABD43745">
    <property type="protein sequence ID" value="ABD43745"/>
    <property type="gene ID" value="APH_1034"/>
</dbReference>
<dbReference type="GeneID" id="92748034"/>
<dbReference type="KEGG" id="aph:APH_1034"/>
<dbReference type="eggNOG" id="COG0049">
    <property type="taxonomic scope" value="Bacteria"/>
</dbReference>
<dbReference type="HOGENOM" id="CLU_072226_1_1_5"/>
<dbReference type="Proteomes" id="UP000001943">
    <property type="component" value="Chromosome"/>
</dbReference>
<dbReference type="GO" id="GO:0015935">
    <property type="term" value="C:small ribosomal subunit"/>
    <property type="evidence" value="ECO:0007669"/>
    <property type="project" value="InterPro"/>
</dbReference>
<dbReference type="GO" id="GO:0019843">
    <property type="term" value="F:rRNA binding"/>
    <property type="evidence" value="ECO:0007669"/>
    <property type="project" value="UniProtKB-UniRule"/>
</dbReference>
<dbReference type="GO" id="GO:0003735">
    <property type="term" value="F:structural constituent of ribosome"/>
    <property type="evidence" value="ECO:0007669"/>
    <property type="project" value="InterPro"/>
</dbReference>
<dbReference type="GO" id="GO:0000049">
    <property type="term" value="F:tRNA binding"/>
    <property type="evidence" value="ECO:0007669"/>
    <property type="project" value="UniProtKB-UniRule"/>
</dbReference>
<dbReference type="GO" id="GO:0006412">
    <property type="term" value="P:translation"/>
    <property type="evidence" value="ECO:0007669"/>
    <property type="project" value="UniProtKB-UniRule"/>
</dbReference>
<dbReference type="CDD" id="cd14869">
    <property type="entry name" value="uS7_Bacteria"/>
    <property type="match status" value="1"/>
</dbReference>
<dbReference type="Gene3D" id="1.10.455.10">
    <property type="entry name" value="Ribosomal protein S7 domain"/>
    <property type="match status" value="1"/>
</dbReference>
<dbReference type="HAMAP" id="MF_00480_B">
    <property type="entry name" value="Ribosomal_uS7_B"/>
    <property type="match status" value="1"/>
</dbReference>
<dbReference type="InterPro" id="IPR000235">
    <property type="entry name" value="Ribosomal_uS7"/>
</dbReference>
<dbReference type="InterPro" id="IPR005717">
    <property type="entry name" value="Ribosomal_uS7_bac/org-type"/>
</dbReference>
<dbReference type="InterPro" id="IPR020606">
    <property type="entry name" value="Ribosomal_uS7_CS"/>
</dbReference>
<dbReference type="InterPro" id="IPR023798">
    <property type="entry name" value="Ribosomal_uS7_dom"/>
</dbReference>
<dbReference type="InterPro" id="IPR036823">
    <property type="entry name" value="Ribosomal_uS7_dom_sf"/>
</dbReference>
<dbReference type="NCBIfam" id="TIGR01029">
    <property type="entry name" value="rpsG_bact"/>
    <property type="match status" value="1"/>
</dbReference>
<dbReference type="PANTHER" id="PTHR11205">
    <property type="entry name" value="RIBOSOMAL PROTEIN S7"/>
    <property type="match status" value="1"/>
</dbReference>
<dbReference type="Pfam" id="PF00177">
    <property type="entry name" value="Ribosomal_S7"/>
    <property type="match status" value="1"/>
</dbReference>
<dbReference type="PIRSF" id="PIRSF002122">
    <property type="entry name" value="RPS7p_RPS7a_RPS5e_RPS7o"/>
    <property type="match status" value="1"/>
</dbReference>
<dbReference type="SUPFAM" id="SSF47973">
    <property type="entry name" value="Ribosomal protein S7"/>
    <property type="match status" value="1"/>
</dbReference>
<dbReference type="PROSITE" id="PS00052">
    <property type="entry name" value="RIBOSOMAL_S7"/>
    <property type="match status" value="1"/>
</dbReference>
<gene>
    <name evidence="1" type="primary">rpsG</name>
    <name type="ordered locus">APH_1034</name>
</gene>
<evidence type="ECO:0000255" key="1">
    <source>
        <dbReference type="HAMAP-Rule" id="MF_00480"/>
    </source>
</evidence>
<evidence type="ECO:0000305" key="2"/>
<sequence>MSRRRRVVRRAVATEGCSGNVLLARFVNVVMHQGKKALAEKIVFGALKMAESRLQGESGIAIFNTAVANVMPKMEVRSRRVGGVTYQIPVEVREDRSTSLALRWIVKAARASRKRTNKTYMSCLCHELMEAYNKRGGACKIKEEKYRMAEANKAFSHFRF</sequence>
<keyword id="KW-0687">Ribonucleoprotein</keyword>
<keyword id="KW-0689">Ribosomal protein</keyword>
<keyword id="KW-0694">RNA-binding</keyword>
<keyword id="KW-0699">rRNA-binding</keyword>
<keyword id="KW-0820">tRNA-binding</keyword>
<reference key="1">
    <citation type="journal article" date="2006" name="PLoS Genet.">
        <title>Comparative genomics of emerging human ehrlichiosis agents.</title>
        <authorList>
            <person name="Dunning Hotopp J.C."/>
            <person name="Lin M."/>
            <person name="Madupu R."/>
            <person name="Crabtree J."/>
            <person name="Angiuoli S.V."/>
            <person name="Eisen J.A."/>
            <person name="Seshadri R."/>
            <person name="Ren Q."/>
            <person name="Wu M."/>
            <person name="Utterback T.R."/>
            <person name="Smith S."/>
            <person name="Lewis M."/>
            <person name="Khouri H."/>
            <person name="Zhang C."/>
            <person name="Niu H."/>
            <person name="Lin Q."/>
            <person name="Ohashi N."/>
            <person name="Zhi N."/>
            <person name="Nelson W.C."/>
            <person name="Brinkac L.M."/>
            <person name="Dodson R.J."/>
            <person name="Rosovitz M.J."/>
            <person name="Sundaram J.P."/>
            <person name="Daugherty S.C."/>
            <person name="Davidsen T."/>
            <person name="Durkin A.S."/>
            <person name="Gwinn M.L."/>
            <person name="Haft D.H."/>
            <person name="Selengut J.D."/>
            <person name="Sullivan S.A."/>
            <person name="Zafar N."/>
            <person name="Zhou L."/>
            <person name="Benahmed F."/>
            <person name="Forberger H."/>
            <person name="Halpin R."/>
            <person name="Mulligan S."/>
            <person name="Robinson J."/>
            <person name="White O."/>
            <person name="Rikihisa Y."/>
            <person name="Tettelin H."/>
        </authorList>
    </citation>
    <scope>NUCLEOTIDE SEQUENCE [LARGE SCALE GENOMIC DNA]</scope>
    <source>
        <strain>HZ</strain>
    </source>
</reference>